<comment type="similarity">
    <text evidence="1">Belongs to the bacterial ribosomal protein bL32 family.</text>
</comment>
<sequence length="56" mass="6385">MAVQQNKPTRSKRGMRRSHDALTATHVSVDKTSGETHLRHHVTADGYYRGRKVINK</sequence>
<dbReference type="EMBL" id="AM942759">
    <property type="protein sequence ID" value="CAR41949.1"/>
    <property type="molecule type" value="Genomic_DNA"/>
</dbReference>
<dbReference type="RefSeq" id="WP_004247080.1">
    <property type="nucleotide sequence ID" value="NC_010554.1"/>
</dbReference>
<dbReference type="SMR" id="B4ETC5"/>
<dbReference type="EnsemblBacteria" id="CAR41949">
    <property type="protein sequence ID" value="CAR41949"/>
    <property type="gene ID" value="PMI0857"/>
</dbReference>
<dbReference type="GeneID" id="97124074"/>
<dbReference type="KEGG" id="pmr:PMI0857"/>
<dbReference type="eggNOG" id="COG0333">
    <property type="taxonomic scope" value="Bacteria"/>
</dbReference>
<dbReference type="HOGENOM" id="CLU_129084_2_1_6"/>
<dbReference type="Proteomes" id="UP000008319">
    <property type="component" value="Chromosome"/>
</dbReference>
<dbReference type="GO" id="GO:0015934">
    <property type="term" value="C:large ribosomal subunit"/>
    <property type="evidence" value="ECO:0007669"/>
    <property type="project" value="InterPro"/>
</dbReference>
<dbReference type="GO" id="GO:0003735">
    <property type="term" value="F:structural constituent of ribosome"/>
    <property type="evidence" value="ECO:0007669"/>
    <property type="project" value="InterPro"/>
</dbReference>
<dbReference type="GO" id="GO:0006412">
    <property type="term" value="P:translation"/>
    <property type="evidence" value="ECO:0007669"/>
    <property type="project" value="UniProtKB-UniRule"/>
</dbReference>
<dbReference type="HAMAP" id="MF_00340">
    <property type="entry name" value="Ribosomal_bL32"/>
    <property type="match status" value="1"/>
</dbReference>
<dbReference type="InterPro" id="IPR002677">
    <property type="entry name" value="Ribosomal_bL32"/>
</dbReference>
<dbReference type="InterPro" id="IPR044957">
    <property type="entry name" value="Ribosomal_bL32_bact"/>
</dbReference>
<dbReference type="InterPro" id="IPR011332">
    <property type="entry name" value="Ribosomal_zn-bd"/>
</dbReference>
<dbReference type="NCBIfam" id="TIGR01031">
    <property type="entry name" value="rpmF_bact"/>
    <property type="match status" value="1"/>
</dbReference>
<dbReference type="PANTHER" id="PTHR35534">
    <property type="entry name" value="50S RIBOSOMAL PROTEIN L32"/>
    <property type="match status" value="1"/>
</dbReference>
<dbReference type="PANTHER" id="PTHR35534:SF1">
    <property type="entry name" value="LARGE RIBOSOMAL SUBUNIT PROTEIN BL32"/>
    <property type="match status" value="1"/>
</dbReference>
<dbReference type="Pfam" id="PF01783">
    <property type="entry name" value="Ribosomal_L32p"/>
    <property type="match status" value="1"/>
</dbReference>
<dbReference type="SUPFAM" id="SSF57829">
    <property type="entry name" value="Zn-binding ribosomal proteins"/>
    <property type="match status" value="1"/>
</dbReference>
<keyword id="KW-1185">Reference proteome</keyword>
<keyword id="KW-0687">Ribonucleoprotein</keyword>
<keyword id="KW-0689">Ribosomal protein</keyword>
<proteinExistence type="inferred from homology"/>
<feature type="chain" id="PRO_1000120160" description="Large ribosomal subunit protein bL32">
    <location>
        <begin position="1"/>
        <end position="56"/>
    </location>
</feature>
<feature type="region of interest" description="Disordered" evidence="2">
    <location>
        <begin position="1"/>
        <end position="35"/>
    </location>
</feature>
<accession>B4ETC5</accession>
<protein>
    <recommendedName>
        <fullName evidence="1">Large ribosomal subunit protein bL32</fullName>
    </recommendedName>
    <alternativeName>
        <fullName evidence="3">50S ribosomal protein L32</fullName>
    </alternativeName>
</protein>
<gene>
    <name evidence="1" type="primary">rpmF</name>
    <name type="ordered locus">PMI0857</name>
</gene>
<reference key="1">
    <citation type="journal article" date="2008" name="J. Bacteriol.">
        <title>Complete genome sequence of uropathogenic Proteus mirabilis, a master of both adherence and motility.</title>
        <authorList>
            <person name="Pearson M.M."/>
            <person name="Sebaihia M."/>
            <person name="Churcher C."/>
            <person name="Quail M.A."/>
            <person name="Seshasayee A.S."/>
            <person name="Luscombe N.M."/>
            <person name="Abdellah Z."/>
            <person name="Arrosmith C."/>
            <person name="Atkin B."/>
            <person name="Chillingworth T."/>
            <person name="Hauser H."/>
            <person name="Jagels K."/>
            <person name="Moule S."/>
            <person name="Mungall K."/>
            <person name="Norbertczak H."/>
            <person name="Rabbinowitsch E."/>
            <person name="Walker D."/>
            <person name="Whithead S."/>
            <person name="Thomson N.R."/>
            <person name="Rather P.N."/>
            <person name="Parkhill J."/>
            <person name="Mobley H.L.T."/>
        </authorList>
    </citation>
    <scope>NUCLEOTIDE SEQUENCE [LARGE SCALE GENOMIC DNA]</scope>
    <source>
        <strain>HI4320</strain>
    </source>
</reference>
<name>RL32_PROMH</name>
<evidence type="ECO:0000255" key="1">
    <source>
        <dbReference type="HAMAP-Rule" id="MF_00340"/>
    </source>
</evidence>
<evidence type="ECO:0000256" key="2">
    <source>
        <dbReference type="SAM" id="MobiDB-lite"/>
    </source>
</evidence>
<evidence type="ECO:0000305" key="3"/>
<organism>
    <name type="scientific">Proteus mirabilis (strain HI4320)</name>
    <dbReference type="NCBI Taxonomy" id="529507"/>
    <lineage>
        <taxon>Bacteria</taxon>
        <taxon>Pseudomonadati</taxon>
        <taxon>Pseudomonadota</taxon>
        <taxon>Gammaproteobacteria</taxon>
        <taxon>Enterobacterales</taxon>
        <taxon>Morganellaceae</taxon>
        <taxon>Proteus</taxon>
    </lineage>
</organism>